<name>FTSH_BORBZ</name>
<keyword id="KW-0067">ATP-binding</keyword>
<keyword id="KW-0997">Cell inner membrane</keyword>
<keyword id="KW-1003">Cell membrane</keyword>
<keyword id="KW-0378">Hydrolase</keyword>
<keyword id="KW-0472">Membrane</keyword>
<keyword id="KW-0479">Metal-binding</keyword>
<keyword id="KW-0482">Metalloprotease</keyword>
<keyword id="KW-0547">Nucleotide-binding</keyword>
<keyword id="KW-0645">Protease</keyword>
<keyword id="KW-0812">Transmembrane</keyword>
<keyword id="KW-1133">Transmembrane helix</keyword>
<keyword id="KW-0862">Zinc</keyword>
<proteinExistence type="inferred from homology"/>
<reference key="1">
    <citation type="journal article" date="2011" name="J. Bacteriol.">
        <title>Whole-genome sequences of thirteen isolates of Borrelia burgdorferi.</title>
        <authorList>
            <person name="Schutzer S.E."/>
            <person name="Fraser-Liggett C.M."/>
            <person name="Casjens S.R."/>
            <person name="Qiu W.G."/>
            <person name="Dunn J.J."/>
            <person name="Mongodin E.F."/>
            <person name="Luft B.J."/>
        </authorList>
    </citation>
    <scope>NUCLEOTIDE SEQUENCE [LARGE SCALE GENOMIC DNA]</scope>
    <source>
        <strain>ZS7</strain>
    </source>
</reference>
<dbReference type="EC" id="3.4.24.-" evidence="1"/>
<dbReference type="EMBL" id="CP001205">
    <property type="protein sequence ID" value="ACK74564.1"/>
    <property type="molecule type" value="Genomic_DNA"/>
</dbReference>
<dbReference type="RefSeq" id="WP_002656600.1">
    <property type="nucleotide sequence ID" value="NC_011728.1"/>
</dbReference>
<dbReference type="SMR" id="B7J0N5"/>
<dbReference type="TCDB" id="3.A.29.1.8">
    <property type="family name" value="the mitochondrial inner membrane i-aaa protease complex (mimp) family"/>
</dbReference>
<dbReference type="KEGG" id="bbz:BbuZS7_0819"/>
<dbReference type="HOGENOM" id="CLU_000688_16_2_12"/>
<dbReference type="Proteomes" id="UP000006901">
    <property type="component" value="Chromosome"/>
</dbReference>
<dbReference type="GO" id="GO:0005886">
    <property type="term" value="C:plasma membrane"/>
    <property type="evidence" value="ECO:0007669"/>
    <property type="project" value="UniProtKB-SubCell"/>
</dbReference>
<dbReference type="GO" id="GO:0005524">
    <property type="term" value="F:ATP binding"/>
    <property type="evidence" value="ECO:0007669"/>
    <property type="project" value="UniProtKB-UniRule"/>
</dbReference>
<dbReference type="GO" id="GO:0016887">
    <property type="term" value="F:ATP hydrolysis activity"/>
    <property type="evidence" value="ECO:0007669"/>
    <property type="project" value="UniProtKB-UniRule"/>
</dbReference>
<dbReference type="GO" id="GO:0004176">
    <property type="term" value="F:ATP-dependent peptidase activity"/>
    <property type="evidence" value="ECO:0007669"/>
    <property type="project" value="InterPro"/>
</dbReference>
<dbReference type="GO" id="GO:0004222">
    <property type="term" value="F:metalloendopeptidase activity"/>
    <property type="evidence" value="ECO:0007669"/>
    <property type="project" value="InterPro"/>
</dbReference>
<dbReference type="GO" id="GO:0008270">
    <property type="term" value="F:zinc ion binding"/>
    <property type="evidence" value="ECO:0007669"/>
    <property type="project" value="UniProtKB-UniRule"/>
</dbReference>
<dbReference type="GO" id="GO:0030163">
    <property type="term" value="P:protein catabolic process"/>
    <property type="evidence" value="ECO:0007669"/>
    <property type="project" value="UniProtKB-UniRule"/>
</dbReference>
<dbReference type="GO" id="GO:0006508">
    <property type="term" value="P:proteolysis"/>
    <property type="evidence" value="ECO:0007669"/>
    <property type="project" value="UniProtKB-KW"/>
</dbReference>
<dbReference type="CDD" id="cd19501">
    <property type="entry name" value="RecA-like_FtsH"/>
    <property type="match status" value="1"/>
</dbReference>
<dbReference type="FunFam" id="1.10.8.60:FF:000001">
    <property type="entry name" value="ATP-dependent zinc metalloprotease FtsH"/>
    <property type="match status" value="1"/>
</dbReference>
<dbReference type="FunFam" id="1.20.58.760:FF:000001">
    <property type="entry name" value="ATP-dependent zinc metalloprotease FtsH"/>
    <property type="match status" value="1"/>
</dbReference>
<dbReference type="FunFam" id="3.40.50.300:FF:000001">
    <property type="entry name" value="ATP-dependent zinc metalloprotease FtsH"/>
    <property type="match status" value="1"/>
</dbReference>
<dbReference type="Gene3D" id="1.10.8.60">
    <property type="match status" value="1"/>
</dbReference>
<dbReference type="Gene3D" id="3.30.720.210">
    <property type="match status" value="1"/>
</dbReference>
<dbReference type="Gene3D" id="3.40.50.300">
    <property type="entry name" value="P-loop containing nucleotide triphosphate hydrolases"/>
    <property type="match status" value="1"/>
</dbReference>
<dbReference type="Gene3D" id="1.20.58.760">
    <property type="entry name" value="Peptidase M41"/>
    <property type="match status" value="1"/>
</dbReference>
<dbReference type="HAMAP" id="MF_01458">
    <property type="entry name" value="FtsH"/>
    <property type="match status" value="1"/>
</dbReference>
<dbReference type="InterPro" id="IPR003593">
    <property type="entry name" value="AAA+_ATPase"/>
</dbReference>
<dbReference type="InterPro" id="IPR041569">
    <property type="entry name" value="AAA_lid_3"/>
</dbReference>
<dbReference type="InterPro" id="IPR003959">
    <property type="entry name" value="ATPase_AAA_core"/>
</dbReference>
<dbReference type="InterPro" id="IPR003960">
    <property type="entry name" value="ATPase_AAA_CS"/>
</dbReference>
<dbReference type="InterPro" id="IPR005936">
    <property type="entry name" value="FtsH"/>
</dbReference>
<dbReference type="InterPro" id="IPR027417">
    <property type="entry name" value="P-loop_NTPase"/>
</dbReference>
<dbReference type="InterPro" id="IPR011546">
    <property type="entry name" value="Pept_M41_FtsH_extracell"/>
</dbReference>
<dbReference type="InterPro" id="IPR000642">
    <property type="entry name" value="Peptidase_M41"/>
</dbReference>
<dbReference type="InterPro" id="IPR037219">
    <property type="entry name" value="Peptidase_M41-like"/>
</dbReference>
<dbReference type="NCBIfam" id="TIGR01241">
    <property type="entry name" value="FtsH_fam"/>
    <property type="match status" value="1"/>
</dbReference>
<dbReference type="PANTHER" id="PTHR23076:SF97">
    <property type="entry name" value="ATP-DEPENDENT ZINC METALLOPROTEASE YME1L1"/>
    <property type="match status" value="1"/>
</dbReference>
<dbReference type="PANTHER" id="PTHR23076">
    <property type="entry name" value="METALLOPROTEASE M41 FTSH"/>
    <property type="match status" value="1"/>
</dbReference>
<dbReference type="Pfam" id="PF00004">
    <property type="entry name" value="AAA"/>
    <property type="match status" value="1"/>
</dbReference>
<dbReference type="Pfam" id="PF17862">
    <property type="entry name" value="AAA_lid_3"/>
    <property type="match status" value="1"/>
</dbReference>
<dbReference type="Pfam" id="PF06480">
    <property type="entry name" value="FtsH_ext"/>
    <property type="match status" value="1"/>
</dbReference>
<dbReference type="Pfam" id="PF01434">
    <property type="entry name" value="Peptidase_M41"/>
    <property type="match status" value="1"/>
</dbReference>
<dbReference type="SMART" id="SM00382">
    <property type="entry name" value="AAA"/>
    <property type="match status" value="1"/>
</dbReference>
<dbReference type="SUPFAM" id="SSF140990">
    <property type="entry name" value="FtsH protease domain-like"/>
    <property type="match status" value="1"/>
</dbReference>
<dbReference type="SUPFAM" id="SSF52540">
    <property type="entry name" value="P-loop containing nucleoside triphosphate hydrolases"/>
    <property type="match status" value="1"/>
</dbReference>
<dbReference type="PROSITE" id="PS00674">
    <property type="entry name" value="AAA"/>
    <property type="match status" value="1"/>
</dbReference>
<protein>
    <recommendedName>
        <fullName evidence="1">ATP-dependent zinc metalloprotease FtsH</fullName>
        <ecNumber evidence="1">3.4.24.-</ecNumber>
    </recommendedName>
</protein>
<sequence length="639" mass="70802">MNGNNNMNNNGKSNNKKKNKNWILGLVVVFLISAIFMSYFIRGGESYKNVPYSTFQSYLDNGLVESVVIIDKNLIQFVVKGSNFAKSYFSTSIPYLDINLLSELKNKKVELSSGKSQASLIGVLLQTLPWILFFIFFFFIFRQTQGGGGKVFTFGKSNAQKYEAGKNKITFKDVAGQEEVKQELREVVEFLKNPKKFEKIGAKIPKGVLLVGSPGTGKTLLAKAVAGEAGVSFFHMSGSDFVEMFVGVGASRVRDLFDNARKNSPCIIFIDELDAVGRSRGAGLGGGHDEREQTLNQLLVEMDGFGTHTNVIVMAATNRPDVLDSALLRPGRFDRQVTVSLPDIKEREAILNIHSLKTKLSKDINLQVIARATPGASGADLANLINEGALIAARNNQDEILMKDMEEARDKILMGVAKKSMTITDRQKLETAYHEAGHALLHYYLEHADPLHKVTIIPRGRALGVAFSLPREDRLSINKHQILDKIKICYGGYASEQINLGVTTAGVQNDLMQATSLAKKMVTEWGMGEEVGPIFLVDDEAPIFLPKEFSKAKAYSENTADKVDREVKRILEECLKEASDILLKHKDQLVKLAKELVLKETLTDKEVRELLGFEANKDEYDLFSSDSTTKEVKGEDVKG</sequence>
<accession>B7J0N5</accession>
<comment type="function">
    <text evidence="1">Acts as a processive, ATP-dependent zinc metallopeptidase for both cytoplasmic and membrane proteins. Plays a role in the quality control of integral membrane proteins.</text>
</comment>
<comment type="cofactor">
    <cofactor evidence="1">
        <name>Zn(2+)</name>
        <dbReference type="ChEBI" id="CHEBI:29105"/>
    </cofactor>
    <text evidence="1">Binds 1 zinc ion per subunit.</text>
</comment>
<comment type="subunit">
    <text evidence="1">Homohexamer.</text>
</comment>
<comment type="subcellular location">
    <subcellularLocation>
        <location evidence="1">Cell inner membrane</location>
        <topology evidence="1">Multi-pass membrane protein</topology>
        <orientation evidence="1">Cytoplasmic side</orientation>
    </subcellularLocation>
</comment>
<comment type="similarity">
    <text evidence="1">In the central section; belongs to the AAA ATPase family.</text>
</comment>
<comment type="similarity">
    <text evidence="1">In the C-terminal section; belongs to the peptidase M41 family.</text>
</comment>
<feature type="chain" id="PRO_0000400331" description="ATP-dependent zinc metalloprotease FtsH">
    <location>
        <begin position="1"/>
        <end position="639"/>
    </location>
</feature>
<feature type="topological domain" description="Cytoplasmic" evidence="1">
    <location>
        <begin position="1"/>
        <end position="20"/>
    </location>
</feature>
<feature type="transmembrane region" description="Helical" evidence="1">
    <location>
        <begin position="21"/>
        <end position="41"/>
    </location>
</feature>
<feature type="topological domain" description="Periplasmic" evidence="1">
    <location>
        <begin position="42"/>
        <end position="120"/>
    </location>
</feature>
<feature type="transmembrane region" description="Helical" evidence="1">
    <location>
        <begin position="121"/>
        <end position="141"/>
    </location>
</feature>
<feature type="topological domain" description="Cytoplasmic" evidence="1">
    <location>
        <begin position="142"/>
        <end position="639"/>
    </location>
</feature>
<feature type="active site" evidence="1">
    <location>
        <position position="435"/>
    </location>
</feature>
<feature type="binding site" evidence="1">
    <location>
        <begin position="212"/>
        <end position="219"/>
    </location>
    <ligand>
        <name>ATP</name>
        <dbReference type="ChEBI" id="CHEBI:30616"/>
    </ligand>
</feature>
<feature type="binding site" evidence="1">
    <location>
        <position position="434"/>
    </location>
    <ligand>
        <name>Zn(2+)</name>
        <dbReference type="ChEBI" id="CHEBI:29105"/>
        <note>catalytic</note>
    </ligand>
</feature>
<feature type="binding site" evidence="1">
    <location>
        <position position="438"/>
    </location>
    <ligand>
        <name>Zn(2+)</name>
        <dbReference type="ChEBI" id="CHEBI:29105"/>
        <note>catalytic</note>
    </ligand>
</feature>
<feature type="binding site" evidence="1">
    <location>
        <position position="510"/>
    </location>
    <ligand>
        <name>Zn(2+)</name>
        <dbReference type="ChEBI" id="CHEBI:29105"/>
        <note>catalytic</note>
    </ligand>
</feature>
<evidence type="ECO:0000255" key="1">
    <source>
        <dbReference type="HAMAP-Rule" id="MF_01458"/>
    </source>
</evidence>
<organism>
    <name type="scientific">Borreliella burgdorferi (strain ZS7)</name>
    <name type="common">Borrelia burgdorferi</name>
    <dbReference type="NCBI Taxonomy" id="445985"/>
    <lineage>
        <taxon>Bacteria</taxon>
        <taxon>Pseudomonadati</taxon>
        <taxon>Spirochaetota</taxon>
        <taxon>Spirochaetia</taxon>
        <taxon>Spirochaetales</taxon>
        <taxon>Borreliaceae</taxon>
        <taxon>Borreliella</taxon>
    </lineage>
</organism>
<gene>
    <name evidence="1" type="primary">ftsH</name>
    <name type="ordered locus">BbuZS7_0819</name>
</gene>